<protein>
    <recommendedName>
        <fullName evidence="1">4-hydroxy-tetrahydrodipicolinate synthase</fullName>
        <shortName evidence="1">HTPA synthase</shortName>
        <ecNumber evidence="1">4.3.3.7</ecNumber>
    </recommendedName>
</protein>
<dbReference type="EC" id="4.3.3.7" evidence="1"/>
<dbReference type="EMBL" id="CP000009">
    <property type="protein sequence ID" value="AAW59858.1"/>
    <property type="status" value="ALT_INIT"/>
    <property type="molecule type" value="Genomic_DNA"/>
</dbReference>
<dbReference type="RefSeq" id="WP_024717298.1">
    <property type="nucleotide sequence ID" value="NC_006677.1"/>
</dbReference>
<dbReference type="SMR" id="Q5FUW9"/>
<dbReference type="STRING" id="290633.GOX0061"/>
<dbReference type="KEGG" id="gox:GOX0061"/>
<dbReference type="eggNOG" id="COG0329">
    <property type="taxonomic scope" value="Bacteria"/>
</dbReference>
<dbReference type="HOGENOM" id="CLU_049343_7_1_5"/>
<dbReference type="UniPathway" id="UPA00034">
    <property type="reaction ID" value="UER00017"/>
</dbReference>
<dbReference type="Proteomes" id="UP000006375">
    <property type="component" value="Chromosome"/>
</dbReference>
<dbReference type="GO" id="GO:0005829">
    <property type="term" value="C:cytosol"/>
    <property type="evidence" value="ECO:0007669"/>
    <property type="project" value="TreeGrafter"/>
</dbReference>
<dbReference type="GO" id="GO:0008840">
    <property type="term" value="F:4-hydroxy-tetrahydrodipicolinate synthase activity"/>
    <property type="evidence" value="ECO:0007669"/>
    <property type="project" value="UniProtKB-UniRule"/>
</dbReference>
<dbReference type="GO" id="GO:0019877">
    <property type="term" value="P:diaminopimelate biosynthetic process"/>
    <property type="evidence" value="ECO:0007669"/>
    <property type="project" value="UniProtKB-UniRule"/>
</dbReference>
<dbReference type="GO" id="GO:0009089">
    <property type="term" value="P:lysine biosynthetic process via diaminopimelate"/>
    <property type="evidence" value="ECO:0007669"/>
    <property type="project" value="UniProtKB-UniRule"/>
</dbReference>
<dbReference type="CDD" id="cd00950">
    <property type="entry name" value="DHDPS"/>
    <property type="match status" value="1"/>
</dbReference>
<dbReference type="Gene3D" id="3.20.20.70">
    <property type="entry name" value="Aldolase class I"/>
    <property type="match status" value="1"/>
</dbReference>
<dbReference type="HAMAP" id="MF_00418">
    <property type="entry name" value="DapA"/>
    <property type="match status" value="1"/>
</dbReference>
<dbReference type="InterPro" id="IPR013785">
    <property type="entry name" value="Aldolase_TIM"/>
</dbReference>
<dbReference type="InterPro" id="IPR005263">
    <property type="entry name" value="DapA"/>
</dbReference>
<dbReference type="InterPro" id="IPR002220">
    <property type="entry name" value="DapA-like"/>
</dbReference>
<dbReference type="InterPro" id="IPR020624">
    <property type="entry name" value="Schiff_base-form_aldolases_CS"/>
</dbReference>
<dbReference type="NCBIfam" id="TIGR00674">
    <property type="entry name" value="dapA"/>
    <property type="match status" value="1"/>
</dbReference>
<dbReference type="PANTHER" id="PTHR12128:SF66">
    <property type="entry name" value="4-HYDROXY-2-OXOGLUTARATE ALDOLASE, MITOCHONDRIAL"/>
    <property type="match status" value="1"/>
</dbReference>
<dbReference type="PANTHER" id="PTHR12128">
    <property type="entry name" value="DIHYDRODIPICOLINATE SYNTHASE"/>
    <property type="match status" value="1"/>
</dbReference>
<dbReference type="Pfam" id="PF00701">
    <property type="entry name" value="DHDPS"/>
    <property type="match status" value="1"/>
</dbReference>
<dbReference type="PIRSF" id="PIRSF001365">
    <property type="entry name" value="DHDPS"/>
    <property type="match status" value="1"/>
</dbReference>
<dbReference type="PRINTS" id="PR00146">
    <property type="entry name" value="DHPICSNTHASE"/>
</dbReference>
<dbReference type="SMART" id="SM01130">
    <property type="entry name" value="DHDPS"/>
    <property type="match status" value="1"/>
</dbReference>
<dbReference type="SUPFAM" id="SSF51569">
    <property type="entry name" value="Aldolase"/>
    <property type="match status" value="1"/>
</dbReference>
<dbReference type="PROSITE" id="PS00665">
    <property type="entry name" value="DHDPS_1"/>
    <property type="match status" value="1"/>
</dbReference>
<keyword id="KW-0028">Amino-acid biosynthesis</keyword>
<keyword id="KW-0963">Cytoplasm</keyword>
<keyword id="KW-0220">Diaminopimelate biosynthesis</keyword>
<keyword id="KW-0456">Lyase</keyword>
<keyword id="KW-0457">Lysine biosynthesis</keyword>
<keyword id="KW-1185">Reference proteome</keyword>
<keyword id="KW-0704">Schiff base</keyword>
<comment type="function">
    <text evidence="1">Catalyzes the condensation of (S)-aspartate-beta-semialdehyde [(S)-ASA] and pyruvate to 4-hydroxy-tetrahydrodipicolinate (HTPA).</text>
</comment>
<comment type="catalytic activity">
    <reaction evidence="1">
        <text>L-aspartate 4-semialdehyde + pyruvate = (2S,4S)-4-hydroxy-2,3,4,5-tetrahydrodipicolinate + H2O + H(+)</text>
        <dbReference type="Rhea" id="RHEA:34171"/>
        <dbReference type="ChEBI" id="CHEBI:15361"/>
        <dbReference type="ChEBI" id="CHEBI:15377"/>
        <dbReference type="ChEBI" id="CHEBI:15378"/>
        <dbReference type="ChEBI" id="CHEBI:67139"/>
        <dbReference type="ChEBI" id="CHEBI:537519"/>
        <dbReference type="EC" id="4.3.3.7"/>
    </reaction>
</comment>
<comment type="pathway">
    <text evidence="1">Amino-acid biosynthesis; L-lysine biosynthesis via DAP pathway; (S)-tetrahydrodipicolinate from L-aspartate: step 3/4.</text>
</comment>
<comment type="subunit">
    <text evidence="1">Homotetramer; dimer of dimers.</text>
</comment>
<comment type="subcellular location">
    <subcellularLocation>
        <location evidence="1">Cytoplasm</location>
    </subcellularLocation>
</comment>
<comment type="similarity">
    <text evidence="1">Belongs to the DapA family.</text>
</comment>
<comment type="caution">
    <text evidence="2">Was originally thought to be a dihydrodipicolinate synthase (DHDPS), catalyzing the condensation of (S)-aspartate-beta-semialdehyde [(S)-ASA] and pyruvate to dihydrodipicolinate (DHDP). However, it was shown in E.coli that the product of the enzymatic reaction is not dihydrodipicolinate but in fact (4S)-4-hydroxy-2,3,4,5-tetrahydro-(2S)-dipicolinic acid (HTPA), and that the consecutive dehydration reaction leading to DHDP is not spontaneous but catalyzed by DapB.</text>
</comment>
<comment type="sequence caution" evidence="2">
    <conflict type="erroneous initiation">
        <sequence resource="EMBL-CDS" id="AAW59858"/>
    </conflict>
</comment>
<evidence type="ECO:0000255" key="1">
    <source>
        <dbReference type="HAMAP-Rule" id="MF_00418"/>
    </source>
</evidence>
<evidence type="ECO:0000305" key="2"/>
<reference key="1">
    <citation type="journal article" date="2005" name="Nat. Biotechnol.">
        <title>Complete genome sequence of the acetic acid bacterium Gluconobacter oxydans.</title>
        <authorList>
            <person name="Prust C."/>
            <person name="Hoffmeister M."/>
            <person name="Liesegang H."/>
            <person name="Wiezer A."/>
            <person name="Fricke W.F."/>
            <person name="Ehrenreich A."/>
            <person name="Gottschalk G."/>
            <person name="Deppenmeier U."/>
        </authorList>
    </citation>
    <scope>NUCLEOTIDE SEQUENCE [LARGE SCALE GENOMIC DNA]</scope>
    <source>
        <strain>621H</strain>
    </source>
</reference>
<gene>
    <name evidence="1" type="primary">dapA</name>
    <name type="ordered locus">GOX0061</name>
</gene>
<sequence length="297" mass="31818">MADTSMYQGSLTALVTPMHTDGRIDFDVSAKLIERQIEAGTTALIPAGTTGESPTLSHEEHGRVVAHCVETANGRVRVMAGAGSNSTSEAVLMAKHAHSVGADSVLVVVPYYNKPTQEGLYRHFMTIADATPLPMFLYCIPGRSVVDISVATMARLAEHPNIVGTKDATANMARPIAVRRAVDKPFNQLSGDDNSVLSFLAAGGDGCIGVTSNVVPHLCADMHLAWQEGRIEDAIAIQDHLTPLHDAMFMESNPGPVKYALSRLGLCNATLRLPLVEPQEETRRAIDAALRSLELLD</sequence>
<accession>Q5FUW9</accession>
<feature type="chain" id="PRO_0000340955" description="4-hydroxy-tetrahydrodipicolinate synthase">
    <location>
        <begin position="1"/>
        <end position="297"/>
    </location>
</feature>
<feature type="active site" description="Proton donor/acceptor" evidence="1">
    <location>
        <position position="138"/>
    </location>
</feature>
<feature type="active site" description="Schiff-base intermediate with substrate" evidence="1">
    <location>
        <position position="166"/>
    </location>
</feature>
<feature type="binding site" evidence="1">
    <location>
        <position position="50"/>
    </location>
    <ligand>
        <name>pyruvate</name>
        <dbReference type="ChEBI" id="CHEBI:15361"/>
    </ligand>
</feature>
<feature type="binding site" evidence="1">
    <location>
        <position position="208"/>
    </location>
    <ligand>
        <name>pyruvate</name>
        <dbReference type="ChEBI" id="CHEBI:15361"/>
    </ligand>
</feature>
<feature type="site" description="Part of a proton relay during catalysis" evidence="1">
    <location>
        <position position="49"/>
    </location>
</feature>
<feature type="site" description="Part of a proton relay during catalysis" evidence="1">
    <location>
        <position position="112"/>
    </location>
</feature>
<organism>
    <name type="scientific">Gluconobacter oxydans (strain 621H)</name>
    <name type="common">Gluconobacter suboxydans</name>
    <dbReference type="NCBI Taxonomy" id="290633"/>
    <lineage>
        <taxon>Bacteria</taxon>
        <taxon>Pseudomonadati</taxon>
        <taxon>Pseudomonadota</taxon>
        <taxon>Alphaproteobacteria</taxon>
        <taxon>Acetobacterales</taxon>
        <taxon>Acetobacteraceae</taxon>
        <taxon>Gluconobacter</taxon>
    </lineage>
</organism>
<name>DAPA_GLUOX</name>
<proteinExistence type="inferred from homology"/>